<dbReference type="EC" id="2.7.1.24" evidence="1"/>
<dbReference type="EMBL" id="AE015929">
    <property type="protein sequence ID" value="AAO04964.1"/>
    <property type="molecule type" value="Genomic_DNA"/>
</dbReference>
<dbReference type="RefSeq" id="NP_764920.1">
    <property type="nucleotide sequence ID" value="NC_004461.1"/>
</dbReference>
<dbReference type="RefSeq" id="WP_002485286.1">
    <property type="nucleotide sequence ID" value="NZ_WBME01000016.1"/>
</dbReference>
<dbReference type="SMR" id="Q8CS70"/>
<dbReference type="GeneID" id="50018521"/>
<dbReference type="KEGG" id="sep:SE_1365"/>
<dbReference type="PATRIC" id="fig|176280.10.peg.1333"/>
<dbReference type="eggNOG" id="COG0237">
    <property type="taxonomic scope" value="Bacteria"/>
</dbReference>
<dbReference type="HOGENOM" id="CLU_057180_0_0_9"/>
<dbReference type="OrthoDB" id="9812943at2"/>
<dbReference type="UniPathway" id="UPA00241">
    <property type="reaction ID" value="UER00356"/>
</dbReference>
<dbReference type="Proteomes" id="UP000001411">
    <property type="component" value="Chromosome"/>
</dbReference>
<dbReference type="GO" id="GO:0005737">
    <property type="term" value="C:cytoplasm"/>
    <property type="evidence" value="ECO:0007669"/>
    <property type="project" value="UniProtKB-SubCell"/>
</dbReference>
<dbReference type="GO" id="GO:0005524">
    <property type="term" value="F:ATP binding"/>
    <property type="evidence" value="ECO:0007669"/>
    <property type="project" value="UniProtKB-UniRule"/>
</dbReference>
<dbReference type="GO" id="GO:0004140">
    <property type="term" value="F:dephospho-CoA kinase activity"/>
    <property type="evidence" value="ECO:0007669"/>
    <property type="project" value="UniProtKB-UniRule"/>
</dbReference>
<dbReference type="GO" id="GO:0015937">
    <property type="term" value="P:coenzyme A biosynthetic process"/>
    <property type="evidence" value="ECO:0007669"/>
    <property type="project" value="UniProtKB-UniRule"/>
</dbReference>
<dbReference type="CDD" id="cd02022">
    <property type="entry name" value="DPCK"/>
    <property type="match status" value="1"/>
</dbReference>
<dbReference type="FunFam" id="3.40.50.300:FF:000991">
    <property type="entry name" value="Dephospho-CoA kinase"/>
    <property type="match status" value="1"/>
</dbReference>
<dbReference type="Gene3D" id="3.40.50.300">
    <property type="entry name" value="P-loop containing nucleotide triphosphate hydrolases"/>
    <property type="match status" value="1"/>
</dbReference>
<dbReference type="HAMAP" id="MF_00376">
    <property type="entry name" value="Dephospho_CoA_kinase"/>
    <property type="match status" value="1"/>
</dbReference>
<dbReference type="InterPro" id="IPR001977">
    <property type="entry name" value="Depp_CoAkinase"/>
</dbReference>
<dbReference type="InterPro" id="IPR027417">
    <property type="entry name" value="P-loop_NTPase"/>
</dbReference>
<dbReference type="NCBIfam" id="TIGR00152">
    <property type="entry name" value="dephospho-CoA kinase"/>
    <property type="match status" value="1"/>
</dbReference>
<dbReference type="PANTHER" id="PTHR10695:SF46">
    <property type="entry name" value="BIFUNCTIONAL COENZYME A SYNTHASE-RELATED"/>
    <property type="match status" value="1"/>
</dbReference>
<dbReference type="PANTHER" id="PTHR10695">
    <property type="entry name" value="DEPHOSPHO-COA KINASE-RELATED"/>
    <property type="match status" value="1"/>
</dbReference>
<dbReference type="Pfam" id="PF01121">
    <property type="entry name" value="CoaE"/>
    <property type="match status" value="1"/>
</dbReference>
<dbReference type="SUPFAM" id="SSF52540">
    <property type="entry name" value="P-loop containing nucleoside triphosphate hydrolases"/>
    <property type="match status" value="1"/>
</dbReference>
<dbReference type="PROSITE" id="PS51219">
    <property type="entry name" value="DPCK"/>
    <property type="match status" value="1"/>
</dbReference>
<gene>
    <name evidence="1" type="primary">coaE</name>
    <name type="ordered locus">SE_1365</name>
</gene>
<organism>
    <name type="scientific">Staphylococcus epidermidis (strain ATCC 12228 / FDA PCI 1200)</name>
    <dbReference type="NCBI Taxonomy" id="176280"/>
    <lineage>
        <taxon>Bacteria</taxon>
        <taxon>Bacillati</taxon>
        <taxon>Bacillota</taxon>
        <taxon>Bacilli</taxon>
        <taxon>Bacillales</taxon>
        <taxon>Staphylococcaceae</taxon>
        <taxon>Staphylococcus</taxon>
    </lineage>
</organism>
<accession>Q8CS70</accession>
<feature type="chain" id="PRO_0000173003" description="Dephospho-CoA kinase">
    <location>
        <begin position="1"/>
        <end position="203"/>
    </location>
</feature>
<feature type="domain" description="DPCK" evidence="1">
    <location>
        <begin position="4"/>
        <end position="203"/>
    </location>
</feature>
<feature type="binding site" evidence="1">
    <location>
        <begin position="12"/>
        <end position="17"/>
    </location>
    <ligand>
        <name>ATP</name>
        <dbReference type="ChEBI" id="CHEBI:30616"/>
    </ligand>
</feature>
<protein>
    <recommendedName>
        <fullName evidence="1">Dephospho-CoA kinase</fullName>
        <ecNumber evidence="1">2.7.1.24</ecNumber>
    </recommendedName>
    <alternativeName>
        <fullName evidence="1">Dephosphocoenzyme A kinase</fullName>
    </alternativeName>
</protein>
<keyword id="KW-0067">ATP-binding</keyword>
<keyword id="KW-0173">Coenzyme A biosynthesis</keyword>
<keyword id="KW-0963">Cytoplasm</keyword>
<keyword id="KW-0418">Kinase</keyword>
<keyword id="KW-0547">Nucleotide-binding</keyword>
<keyword id="KW-0808">Transferase</keyword>
<proteinExistence type="inferred from homology"/>
<reference key="1">
    <citation type="journal article" date="2003" name="Mol. Microbiol.">
        <title>Genome-based analysis of virulence genes in a non-biofilm-forming Staphylococcus epidermidis strain (ATCC 12228).</title>
        <authorList>
            <person name="Zhang Y.-Q."/>
            <person name="Ren S.-X."/>
            <person name="Li H.-L."/>
            <person name="Wang Y.-X."/>
            <person name="Fu G."/>
            <person name="Yang J."/>
            <person name="Qin Z.-Q."/>
            <person name="Miao Y.-G."/>
            <person name="Wang W.-Y."/>
            <person name="Chen R.-S."/>
            <person name="Shen Y."/>
            <person name="Chen Z."/>
            <person name="Yuan Z.-H."/>
            <person name="Zhao G.-P."/>
            <person name="Qu D."/>
            <person name="Danchin A."/>
            <person name="Wen Y.-M."/>
        </authorList>
    </citation>
    <scope>NUCLEOTIDE SEQUENCE [LARGE SCALE GENOMIC DNA]</scope>
    <source>
        <strain>ATCC 12228 / FDA PCI 1200</strain>
    </source>
</reference>
<sequence length="203" mass="23113">MSKVIGITGGIATGKSTVSELLTAYGFKIVDADIASREAVKKGSKGLEQVKEIFGEEAIDENGEMNRQYVGEIVFNHPDLREALNEIVHPIVREIMEQEKNNYLEHGYHVIMDIPLLYENELQDTVDEVWVVYTSESIQIDRLMERNNLSLEDAKARVYSQISIDKKSRMANHVIDNLGDKLELKQNLQKLLEEEGYIQSESE</sequence>
<evidence type="ECO:0000255" key="1">
    <source>
        <dbReference type="HAMAP-Rule" id="MF_00376"/>
    </source>
</evidence>
<comment type="function">
    <text evidence="1">Catalyzes the phosphorylation of the 3'-hydroxyl group of dephosphocoenzyme A to form coenzyme A.</text>
</comment>
<comment type="catalytic activity">
    <reaction evidence="1">
        <text>3'-dephospho-CoA + ATP = ADP + CoA + H(+)</text>
        <dbReference type="Rhea" id="RHEA:18245"/>
        <dbReference type="ChEBI" id="CHEBI:15378"/>
        <dbReference type="ChEBI" id="CHEBI:30616"/>
        <dbReference type="ChEBI" id="CHEBI:57287"/>
        <dbReference type="ChEBI" id="CHEBI:57328"/>
        <dbReference type="ChEBI" id="CHEBI:456216"/>
        <dbReference type="EC" id="2.7.1.24"/>
    </reaction>
</comment>
<comment type="pathway">
    <text evidence="1">Cofactor biosynthesis; coenzyme A biosynthesis; CoA from (R)-pantothenate: step 5/5.</text>
</comment>
<comment type="subcellular location">
    <subcellularLocation>
        <location evidence="1">Cytoplasm</location>
    </subcellularLocation>
</comment>
<comment type="similarity">
    <text evidence="1">Belongs to the CoaE family.</text>
</comment>
<name>COAE_STAES</name>